<gene>
    <name evidence="1" type="primary">acpS</name>
    <name type="ordered locus">Tbd_0728</name>
</gene>
<feature type="chain" id="PRO_0000228315" description="Holo-[acyl-carrier-protein] synthase">
    <location>
        <begin position="1"/>
        <end position="131"/>
    </location>
</feature>
<feature type="binding site" evidence="1">
    <location>
        <position position="8"/>
    </location>
    <ligand>
        <name>Mg(2+)</name>
        <dbReference type="ChEBI" id="CHEBI:18420"/>
    </ligand>
</feature>
<feature type="binding site" evidence="1">
    <location>
        <position position="57"/>
    </location>
    <ligand>
        <name>Mg(2+)</name>
        <dbReference type="ChEBI" id="CHEBI:18420"/>
    </ligand>
</feature>
<evidence type="ECO:0000255" key="1">
    <source>
        <dbReference type="HAMAP-Rule" id="MF_00101"/>
    </source>
</evidence>
<reference key="1">
    <citation type="journal article" date="2006" name="J. Bacteriol.">
        <title>The genome sequence of the obligately chemolithoautotrophic, facultatively anaerobic bacterium Thiobacillus denitrificans.</title>
        <authorList>
            <person name="Beller H.R."/>
            <person name="Chain P.S."/>
            <person name="Letain T.E."/>
            <person name="Chakicherla A."/>
            <person name="Larimer F.W."/>
            <person name="Richardson P.M."/>
            <person name="Coleman M.A."/>
            <person name="Wood A.P."/>
            <person name="Kelly D.P."/>
        </authorList>
    </citation>
    <scope>NUCLEOTIDE SEQUENCE [LARGE SCALE GENOMIC DNA]</scope>
    <source>
        <strain>ATCC 25259 / T1</strain>
    </source>
</reference>
<name>ACPS_THIDA</name>
<protein>
    <recommendedName>
        <fullName evidence="1">Holo-[acyl-carrier-protein] synthase</fullName>
        <shortName evidence="1">Holo-ACP synthase</shortName>
        <ecNumber evidence="1">2.7.8.7</ecNumber>
    </recommendedName>
    <alternativeName>
        <fullName evidence="1">4'-phosphopantetheinyl transferase AcpS</fullName>
    </alternativeName>
</protein>
<dbReference type="EC" id="2.7.8.7" evidence="1"/>
<dbReference type="EMBL" id="CP000116">
    <property type="protein sequence ID" value="AAZ96681.1"/>
    <property type="molecule type" value="Genomic_DNA"/>
</dbReference>
<dbReference type="RefSeq" id="WP_011311240.1">
    <property type="nucleotide sequence ID" value="NC_007404.1"/>
</dbReference>
<dbReference type="SMR" id="Q3SKU1"/>
<dbReference type="STRING" id="292415.Tbd_0728"/>
<dbReference type="KEGG" id="tbd:Tbd_0728"/>
<dbReference type="eggNOG" id="COG0736">
    <property type="taxonomic scope" value="Bacteria"/>
</dbReference>
<dbReference type="HOGENOM" id="CLU_089696_3_1_4"/>
<dbReference type="OrthoDB" id="517356at2"/>
<dbReference type="Proteomes" id="UP000008291">
    <property type="component" value="Chromosome"/>
</dbReference>
<dbReference type="GO" id="GO:0005737">
    <property type="term" value="C:cytoplasm"/>
    <property type="evidence" value="ECO:0007669"/>
    <property type="project" value="UniProtKB-SubCell"/>
</dbReference>
<dbReference type="GO" id="GO:0008897">
    <property type="term" value="F:holo-[acyl-carrier-protein] synthase activity"/>
    <property type="evidence" value="ECO:0007669"/>
    <property type="project" value="UniProtKB-UniRule"/>
</dbReference>
<dbReference type="GO" id="GO:0000287">
    <property type="term" value="F:magnesium ion binding"/>
    <property type="evidence" value="ECO:0007669"/>
    <property type="project" value="UniProtKB-UniRule"/>
</dbReference>
<dbReference type="GO" id="GO:0006633">
    <property type="term" value="P:fatty acid biosynthetic process"/>
    <property type="evidence" value="ECO:0007669"/>
    <property type="project" value="UniProtKB-UniRule"/>
</dbReference>
<dbReference type="Gene3D" id="3.90.470.20">
    <property type="entry name" value="4'-phosphopantetheinyl transferase domain"/>
    <property type="match status" value="1"/>
</dbReference>
<dbReference type="HAMAP" id="MF_00101">
    <property type="entry name" value="AcpS"/>
    <property type="match status" value="1"/>
</dbReference>
<dbReference type="InterPro" id="IPR008278">
    <property type="entry name" value="4-PPantetheinyl_Trfase_dom"/>
</dbReference>
<dbReference type="InterPro" id="IPR037143">
    <property type="entry name" value="4-PPantetheinyl_Trfase_dom_sf"/>
</dbReference>
<dbReference type="InterPro" id="IPR002582">
    <property type="entry name" value="ACPS"/>
</dbReference>
<dbReference type="InterPro" id="IPR004568">
    <property type="entry name" value="Ppantetheine-prot_Trfase_dom"/>
</dbReference>
<dbReference type="NCBIfam" id="TIGR00516">
    <property type="entry name" value="acpS"/>
    <property type="match status" value="1"/>
</dbReference>
<dbReference type="NCBIfam" id="TIGR00556">
    <property type="entry name" value="pantethn_trn"/>
    <property type="match status" value="1"/>
</dbReference>
<dbReference type="Pfam" id="PF01648">
    <property type="entry name" value="ACPS"/>
    <property type="match status" value="1"/>
</dbReference>
<dbReference type="SUPFAM" id="SSF56214">
    <property type="entry name" value="4'-phosphopantetheinyl transferase"/>
    <property type="match status" value="1"/>
</dbReference>
<comment type="function">
    <text evidence="1">Transfers the 4'-phosphopantetheine moiety from coenzyme A to a Ser of acyl-carrier-protein.</text>
</comment>
<comment type="catalytic activity">
    <reaction evidence="1">
        <text>apo-[ACP] + CoA = holo-[ACP] + adenosine 3',5'-bisphosphate + H(+)</text>
        <dbReference type="Rhea" id="RHEA:12068"/>
        <dbReference type="Rhea" id="RHEA-COMP:9685"/>
        <dbReference type="Rhea" id="RHEA-COMP:9690"/>
        <dbReference type="ChEBI" id="CHEBI:15378"/>
        <dbReference type="ChEBI" id="CHEBI:29999"/>
        <dbReference type="ChEBI" id="CHEBI:57287"/>
        <dbReference type="ChEBI" id="CHEBI:58343"/>
        <dbReference type="ChEBI" id="CHEBI:64479"/>
        <dbReference type="EC" id="2.7.8.7"/>
    </reaction>
</comment>
<comment type="cofactor">
    <cofactor evidence="1">
        <name>Mg(2+)</name>
        <dbReference type="ChEBI" id="CHEBI:18420"/>
    </cofactor>
</comment>
<comment type="subcellular location">
    <subcellularLocation>
        <location evidence="1">Cytoplasm</location>
    </subcellularLocation>
</comment>
<comment type="similarity">
    <text evidence="1">Belongs to the P-Pant transferase superfamily. AcpS family.</text>
</comment>
<accession>Q3SKU1</accession>
<keyword id="KW-0963">Cytoplasm</keyword>
<keyword id="KW-0275">Fatty acid biosynthesis</keyword>
<keyword id="KW-0276">Fatty acid metabolism</keyword>
<keyword id="KW-0444">Lipid biosynthesis</keyword>
<keyword id="KW-0443">Lipid metabolism</keyword>
<keyword id="KW-0460">Magnesium</keyword>
<keyword id="KW-0479">Metal-binding</keyword>
<keyword id="KW-1185">Reference proteome</keyword>
<keyword id="KW-0808">Transferase</keyword>
<proteinExistence type="inferred from homology"/>
<sequence length="131" mass="14319">MIHGIGTDLLDARRIRAGLARYGEHYADRILAPAEHTRYYASRDPAGFLAKCFAAKEAFAKALGTGLRAPVTLRNIAVMRDAHGKPHIDCAPELTAFLRERGVTAQHVSLSDEGDFVLAFVVLEQSATQED</sequence>
<organism>
    <name type="scientific">Thiobacillus denitrificans (strain ATCC 25259 / T1)</name>
    <dbReference type="NCBI Taxonomy" id="292415"/>
    <lineage>
        <taxon>Bacteria</taxon>
        <taxon>Pseudomonadati</taxon>
        <taxon>Pseudomonadota</taxon>
        <taxon>Betaproteobacteria</taxon>
        <taxon>Nitrosomonadales</taxon>
        <taxon>Thiobacillaceae</taxon>
        <taxon>Thiobacillus</taxon>
    </lineage>
</organism>